<protein>
    <recommendedName>
        <fullName>Diuretic hormone 41</fullName>
    </recommendedName>
</protein>
<comment type="function">
    <text evidence="3">Regulation of fluid secretion.</text>
</comment>
<comment type="subcellular location">
    <subcellularLocation>
        <location evidence="3">Secreted</location>
    </subcellularLocation>
</comment>
<comment type="similarity">
    <text evidence="2">Belongs to the sauvagine/corticotropin-releasing factor/urotensin I family.</text>
</comment>
<reference evidence="4" key="1">
    <citation type="submission" date="2007-03" db="EMBL/GenBank/DDBJ databases">
        <title>Comprehensive analysis of neuropeptide genes in the silkworm, Bombyx mori.</title>
        <authorList>
            <person name="Tanaka Y."/>
            <person name="Roller L."/>
            <person name="Yamanaka N."/>
            <person name="Kataoka H."/>
        </authorList>
    </citation>
    <scope>NUCLEOTIDE SEQUENCE [MRNA]</scope>
</reference>
<proteinExistence type="evidence at transcript level"/>
<accession>B3IUD8</accession>
<feature type="signal peptide" evidence="2">
    <location>
        <begin position="1"/>
        <end position="26"/>
    </location>
</feature>
<feature type="propeptide" id="PRO_0000365110" evidence="1">
    <location>
        <begin position="27"/>
        <end position="76"/>
    </location>
</feature>
<feature type="peptide" id="PRO_0000365111" description="Diuretic hormone 41">
    <location>
        <begin position="79"/>
        <end position="119"/>
    </location>
</feature>
<feature type="propeptide" id="PRO_0000365112" evidence="1">
    <location>
        <begin position="123"/>
        <end position="136"/>
    </location>
</feature>
<feature type="modified residue" description="Isoleucine amide" evidence="1">
    <location>
        <position position="119"/>
    </location>
</feature>
<evidence type="ECO:0000250" key="1">
    <source>
        <dbReference type="UniProtKB" id="P21819"/>
    </source>
</evidence>
<evidence type="ECO:0000255" key="2"/>
<evidence type="ECO:0000305" key="3"/>
<evidence type="ECO:0000312" key="4">
    <source>
        <dbReference type="EMBL" id="BAG50373.1"/>
    </source>
</evidence>
<gene>
    <name type="primary">dh41</name>
</gene>
<name>DIH41_BOMMO</name>
<sequence>MMWWAVWCAAMVAGSVFTAAAPPTDSIDLMQMDPSLADDESLGFAMQSLSGRYAAAPWLYLLADVSHDPQNGSDRVKRRMPSLSIDMPMSVLRQKLSLENERKLQSLRAMANRNFLNDIGKRGFHWAPSAKAAKFY</sequence>
<organism>
    <name type="scientific">Bombyx mori</name>
    <name type="common">Silk moth</name>
    <dbReference type="NCBI Taxonomy" id="7091"/>
    <lineage>
        <taxon>Eukaryota</taxon>
        <taxon>Metazoa</taxon>
        <taxon>Ecdysozoa</taxon>
        <taxon>Arthropoda</taxon>
        <taxon>Hexapoda</taxon>
        <taxon>Insecta</taxon>
        <taxon>Pterygota</taxon>
        <taxon>Neoptera</taxon>
        <taxon>Endopterygota</taxon>
        <taxon>Lepidoptera</taxon>
        <taxon>Glossata</taxon>
        <taxon>Ditrysia</taxon>
        <taxon>Bombycoidea</taxon>
        <taxon>Bombycidae</taxon>
        <taxon>Bombycinae</taxon>
        <taxon>Bombyx</taxon>
    </lineage>
</organism>
<dbReference type="EMBL" id="AB298934">
    <property type="protein sequence ID" value="BAG50373.1"/>
    <property type="molecule type" value="mRNA"/>
</dbReference>
<dbReference type="SMR" id="B3IUD8"/>
<dbReference type="STRING" id="7091.B3IUD8"/>
<dbReference type="EnsemblMetazoa" id="NM_001130895.1">
    <property type="protein sequence ID" value="NP_001124367.1"/>
    <property type="gene ID" value="GeneID_100174841"/>
</dbReference>
<dbReference type="KEGG" id="bmor:100174841"/>
<dbReference type="CTD" id="41170"/>
<dbReference type="InParanoid" id="B3IUD8"/>
<dbReference type="Proteomes" id="UP000005204">
    <property type="component" value="Unassembled WGS sequence"/>
</dbReference>
<dbReference type="GO" id="GO:0005576">
    <property type="term" value="C:extracellular region"/>
    <property type="evidence" value="ECO:0000250"/>
    <property type="project" value="UniProtKB"/>
</dbReference>
<dbReference type="GO" id="GO:0008613">
    <property type="term" value="F:diuretic hormone activity"/>
    <property type="evidence" value="ECO:0000250"/>
    <property type="project" value="UniProtKB"/>
</dbReference>
<dbReference type="GO" id="GO:0007589">
    <property type="term" value="P:body fluid secretion"/>
    <property type="evidence" value="ECO:0000250"/>
    <property type="project" value="UniProtKB"/>
</dbReference>
<dbReference type="InterPro" id="IPR018446">
    <property type="entry name" value="Corticotropin-releasing_fac_CS"/>
</dbReference>
<dbReference type="InterPro" id="IPR000187">
    <property type="entry name" value="CRF"/>
</dbReference>
<dbReference type="Pfam" id="PF00473">
    <property type="entry name" value="CRF"/>
    <property type="match status" value="1"/>
</dbReference>
<dbReference type="SMART" id="SM00039">
    <property type="entry name" value="CRF"/>
    <property type="match status" value="1"/>
</dbReference>
<dbReference type="PROSITE" id="PS00511">
    <property type="entry name" value="CRF"/>
    <property type="match status" value="1"/>
</dbReference>
<keyword id="KW-0027">Amidation</keyword>
<keyword id="KW-0165">Cleavage on pair of basic residues</keyword>
<keyword id="KW-0372">Hormone</keyword>
<keyword id="KW-1185">Reference proteome</keyword>
<keyword id="KW-0964">Secreted</keyword>
<keyword id="KW-0732">Signal</keyword>